<protein>
    <recommendedName>
        <fullName evidence="21">Disease resistance protein RPS4</fullName>
    </recommendedName>
    <alternativeName>
        <fullName>Probable NAD(+) hydrolase RPS4</fullName>
        <ecNumber evidence="26 27">3.2.2.6</ecNumber>
    </alternativeName>
    <alternativeName>
        <fullName evidence="21">Resistance to Pseudomonas syringae 4</fullName>
    </alternativeName>
    <alternativeName>
        <fullName evidence="29">TIR-NBS-LRR class disease resistance protein</fullName>
    </alternativeName>
</protein>
<proteinExistence type="evidence at protein level"/>
<name>RPS4_ARATH</name>
<keyword id="KW-0002">3D-structure</keyword>
<keyword id="KW-0025">Alternative splicing</keyword>
<keyword id="KW-0067">ATP-binding</keyword>
<keyword id="KW-0963">Cytoplasm</keyword>
<keyword id="KW-0378">Hydrolase</keyword>
<keyword id="KW-0433">Leucine-rich repeat</keyword>
<keyword id="KW-0472">Membrane</keyword>
<keyword id="KW-0520">NAD</keyword>
<keyword id="KW-0547">Nucleotide-binding</keyword>
<keyword id="KW-0539">Nucleus</keyword>
<keyword id="KW-0611">Plant defense</keyword>
<keyword id="KW-1185">Reference proteome</keyword>
<keyword id="KW-0677">Repeat</keyword>
<reference key="1">
    <citation type="journal article" date="1999" name="Plant J.">
        <title>The Arabidopsis RPS4 bacterial-resistance gene is a member of the TIR-NBS-LRR family of disease-resistance genes.</title>
        <authorList>
            <person name="Gassmann W."/>
            <person name="Hinsch M.E."/>
            <person name="Staskawicz B.J."/>
        </authorList>
    </citation>
    <scope>NUCLEOTIDE SEQUENCE [GENOMIC DNA]</scope>
    <scope>FUNCTION</scope>
    <scope>ALTERNATIVE SPLICING</scope>
    <source>
        <strain>cv. Columbia</strain>
    </source>
</reference>
<reference key="2">
    <citation type="journal article" date="2000" name="DNA Res.">
        <title>Structural analysis of Arabidopsis thaliana chromosome 5. X. Sequence features of the regions of 3,076,755 bp covered by sixty P1 and TAC clones.</title>
        <authorList>
            <person name="Sato S."/>
            <person name="Nakamura Y."/>
            <person name="Kaneko T."/>
            <person name="Katoh T."/>
            <person name="Asamizu E."/>
            <person name="Kotani H."/>
            <person name="Tabata S."/>
        </authorList>
    </citation>
    <scope>NUCLEOTIDE SEQUENCE [LARGE SCALE GENOMIC DNA]</scope>
    <source>
        <strain>cv. Columbia</strain>
    </source>
</reference>
<reference key="3">
    <citation type="journal article" date="2017" name="Plant J.">
        <title>Araport11: a complete reannotation of the Arabidopsis thaliana reference genome.</title>
        <authorList>
            <person name="Cheng C.Y."/>
            <person name="Krishnakumar V."/>
            <person name="Chan A.P."/>
            <person name="Thibaud-Nissen F."/>
            <person name="Schobel S."/>
            <person name="Town C.D."/>
        </authorList>
    </citation>
    <scope>GENOME REANNOTATION</scope>
    <source>
        <strain>cv. Columbia</strain>
    </source>
</reference>
<reference key="4">
    <citation type="journal article" date="2004" name="Plant J.">
        <title>Two Arabidopsis srfr (suppressor of rps4-RLD) mutants exhibit avrRps4-specific disease resistance independent of RPS4.</title>
        <authorList>
            <person name="Kwon S.I."/>
            <person name="Koczan J.M."/>
            <person name="Gassmann W."/>
        </authorList>
    </citation>
    <scope>FUNCTION</scope>
    <scope>DISRUPTION PHENOTYPE</scope>
</reference>
<reference key="5">
    <citation type="journal article" date="2007" name="Curr. Biol.">
        <title>Nuclear accumulation of the Arabidopsis immune receptor RPS4 is necessary for triggering EDS1-dependent defense.</title>
        <authorList>
            <person name="Wirthmueller L."/>
            <person name="Zhang Y."/>
            <person name="Jones J.D."/>
            <person name="Parker J.E."/>
        </authorList>
    </citation>
    <scope>SUBCELLULAR LOCATION</scope>
    <scope>MUTAGENESIS OF 1172-LYS-LYS-1173 AND 1184-LYS-LYS-1185</scope>
</reference>
<reference key="6">
    <citation type="journal article" date="2007" name="Plant Physiol.">
        <title>Alternative splicing and mRNA levels of the disease resistance gene RPS4 are induced during defense responses.</title>
        <authorList>
            <person name="Zhang X.C."/>
            <person name="Gassmann W."/>
        </authorList>
    </citation>
    <scope>ALTERNATIVE SPLICING</scope>
    <scope>INDUCTION BY AVRRPS4</scope>
    <source>
        <strain>cv. Columbia</strain>
        <strain>cv. Landsberg erecta</strain>
        <strain>cv. Wassilewskija</strain>
    </source>
</reference>
<reference key="7">
    <citation type="journal article" date="2009" name="Plant J.">
        <title>RRS1 and RPS4 provide a dual Resistance-gene system against fungal and bacterial pathogens.</title>
        <authorList>
            <person name="Narusaka M."/>
            <person name="Shirasu K."/>
            <person name="Noutoshi Y."/>
            <person name="Kubo Y."/>
            <person name="Shiraishi T."/>
            <person name="Iwabuchi M."/>
            <person name="Narusaka Y."/>
        </authorList>
    </citation>
    <scope>FUNCTION</scope>
    <source>
        <strain>cv. Columbia</strain>
        <strain>cv. RLD</strain>
        <strain>cv. Wassilewskija</strain>
    </source>
</reference>
<reference key="8">
    <citation type="journal article" date="2009" name="Mol. Plant Microbe Interact.">
        <title>The TIR domain of TIR-NB-LRR resistance proteins is a signaling domain involved in cell death induction.</title>
        <authorList>
            <person name="Swiderski M.R."/>
            <person name="Birker D."/>
            <person name="Jones J.D."/>
        </authorList>
    </citation>
    <scope>DOMAIN</scope>
    <scope>MUTAGENESIS OF ASP-26; ARG-28; 49-ASP--ASP-53; ARG-54; SER-68; TYR-79; TRP-84; CYS-85; GLU-88; ASP-94; CYS-95; 97-ASP-GLU-98; GLU-111; PRO-112; 113-SER-THR-114; ARG-116; 129-MET-ALA-130; 133-ASP-GLU-134; ARG-135; 136-LYS--LYS-138; TRP-139; LYS-140 AND GLU-160</scope>
</reference>
<reference key="9">
    <citation type="journal article" date="2010" name="PLoS Pathog.">
        <title>The Arabidopsis resistance-like gene SNC1 is activated by mutations in SRFR1 and contributes to resistance to the bacterial effector AvrRps4.</title>
        <authorList>
            <person name="Kim S.H."/>
            <person name="Gao F."/>
            <person name="Bhattacharjee S."/>
            <person name="Adiasor J.A."/>
            <person name="Nam J.C."/>
            <person name="Gassmann W."/>
        </authorList>
    </citation>
    <scope>INTERACTION WITH SRFR1</scope>
    <scope>SUBCELLULAR LOCATION</scope>
</reference>
<reference key="10">
    <citation type="journal article" date="2011" name="Science">
        <title>Arabidopsis EDS1 connects pathogen effector recognition to cell compartment-specific immune responses.</title>
        <authorList>
            <person name="Heidrich K."/>
            <person name="Wirthmueller L."/>
            <person name="Tasset C."/>
            <person name="Pouzet C."/>
            <person name="Deslandes L."/>
            <person name="Parker J.E."/>
        </authorList>
    </citation>
    <scope>INTERACTION WITH EDS1</scope>
    <scope>SUBCELLULAR LOCATION</scope>
</reference>
<reference key="11">
    <citation type="journal article" date="2011" name="Science">
        <title>Pathogen effectors target Arabidopsis EDS1 and alter its interactions with immune regulators.</title>
        <authorList>
            <person name="Bhattacharjee S."/>
            <person name="Halane M.K."/>
            <person name="Kim S.H."/>
            <person name="Gassmann W."/>
        </authorList>
    </citation>
    <scope>INTERACTION WITH EDS1</scope>
</reference>
<reference key="12">
    <citation type="journal article" date="2012" name="Plant Cell">
        <title>Abscisic acid deficiency antagonizes high-temperature inhibition of disease resistance through enhancing nuclear accumulation of resistance proteins SNC1 and RPS4 in Arabidopsis.</title>
        <authorList>
            <person name="Mang H.G."/>
            <person name="Qian W."/>
            <person name="Zhu Y."/>
            <person name="Qian J."/>
            <person name="Kang H.G."/>
            <person name="Klessig D.F."/>
            <person name="Hua J."/>
        </authorList>
    </citation>
    <scope>FUNCTION</scope>
    <scope>SUBCELLULAR LOCATION</scope>
</reference>
<reference key="13">
    <citation type="journal article" date="2012" name="Plant J.">
        <title>The cyclin L homolog MOS12 and the MOS4-associated complex are required for the proper splicing of plant resistance genes.</title>
        <authorList>
            <person name="Xu F."/>
            <person name="Xu S."/>
            <person name="Wiermer M."/>
            <person name="Zhang Y."/>
            <person name="Li X."/>
        </authorList>
    </citation>
    <scope>MISCELLANEOUS</scope>
</reference>
<reference key="14">
    <citation type="journal article" date="2013" name="Front. Plant Sci.">
        <title>Arabidopsis TNL-WRKY domain receptor RRS1 contributes to temperature-conditioned RPS4 auto-immunity.</title>
        <authorList>
            <person name="Heidrich K."/>
            <person name="Tsuda K."/>
            <person name="Blanvillain-Baufume S."/>
            <person name="Wirthmueller L."/>
            <person name="Bautor J."/>
            <person name="Parker J.E."/>
        </authorList>
    </citation>
    <scope>FUNCTION</scope>
    <source>
        <strain>cv. Columbia</strain>
        <strain>cv. Wassilewskija</strain>
    </source>
</reference>
<reference key="15">
    <citation type="journal article" date="2014" name="Front. Plant Sci.">
        <title>A novel conserved mechanism for plant NLR protein pairs: the 'integrated decoy' hypothesis.</title>
        <authorList>
            <person name="Cesari S."/>
            <person name="Bernoux M."/>
            <person name="Moncuquet P."/>
            <person name="Kroj T."/>
            <person name="Dodds P.N."/>
        </authorList>
    </citation>
    <scope>REVIEW</scope>
</reference>
<reference key="16">
    <citation type="journal article" date="2019" name="Science">
        <title>NAD+ cleavage activity by animal and plant TIR domains in cell death pathways.</title>
        <authorList>
            <person name="Horsefield S."/>
            <person name="Burdett H."/>
            <person name="Zhang X."/>
            <person name="Manik M.K."/>
            <person name="Shi Y."/>
            <person name="Chen J."/>
            <person name="Qi T."/>
            <person name="Gilley J."/>
            <person name="Lai J.S."/>
            <person name="Rank M.X."/>
            <person name="Casey L.W."/>
            <person name="Gu W."/>
            <person name="Ericsson D.J."/>
            <person name="Foley G."/>
            <person name="Hughes R.O."/>
            <person name="Bosanac T."/>
            <person name="von Itzstein M."/>
            <person name="Rathjen J.P."/>
            <person name="Nanson J.D."/>
            <person name="Boden M."/>
            <person name="Dry I.B."/>
            <person name="Williams S.J."/>
            <person name="Staskawicz B.J."/>
            <person name="Coleman M.P."/>
            <person name="Ve T."/>
            <person name="Dodds P.N."/>
            <person name="Kobe B."/>
        </authorList>
    </citation>
    <scope>FUNCTION</scope>
    <scope>CATALYTIC ACTIVITY</scope>
</reference>
<reference key="17">
    <citation type="journal article" date="2019" name="Science">
        <title>TIR domains of plant immune receptors are NAD+-cleaving enzymes that promote cell death.</title>
        <authorList>
            <person name="Wan L."/>
            <person name="Essuman K."/>
            <person name="Anderson R.G."/>
            <person name="Sasaki Y."/>
            <person name="Monteiro F."/>
            <person name="Chung E.H."/>
            <person name="Osborne Nishimura E."/>
            <person name="DiAntonio A."/>
            <person name="Milbrandt J."/>
            <person name="Dangl J.L."/>
            <person name="Nishimura M.T."/>
        </authorList>
    </citation>
    <scope>FUNCTION</scope>
    <scope>CATALYTIC ACTIVITY</scope>
</reference>
<reference key="18">
    <citation type="journal article" date="2013" name="Acta Crystallogr. F">
        <title>Crystallization and preliminary X-ray diffraction analyses of the TIR domains of three TIR-NB-LRR proteins that are involved in disease resistance in Arabidopsis thaliana.</title>
        <authorList>
            <person name="Wan L."/>
            <person name="Zhang X."/>
            <person name="Williams S.J."/>
            <person name="Ve T."/>
            <person name="Bernoux M."/>
            <person name="Sohn K.H."/>
            <person name="Jones J.D."/>
            <person name="Dodds P.N."/>
            <person name="Kobe B."/>
        </authorList>
    </citation>
    <scope>CRYSTALLIZATION OF 11-178</scope>
</reference>
<reference key="19">
    <citation type="journal article" date="2014" name="Science">
        <title>Structural basis for assembly and function of a heterodimeric plant immune receptor.</title>
        <authorList>
            <person name="Williams S.J."/>
            <person name="Sohn K.H."/>
            <person name="Wan L."/>
            <person name="Bernoux M."/>
            <person name="Sarris P.F."/>
            <person name="Segonzac C."/>
            <person name="Ve T."/>
            <person name="Ma Y."/>
            <person name="Saucet S.B."/>
            <person name="Ericsson D.J."/>
            <person name="Casey L.W."/>
            <person name="Lonhienne T."/>
            <person name="Winzor D.J."/>
            <person name="Zhang X."/>
            <person name="Coerdt A."/>
            <person name="Parker J.E."/>
            <person name="Dodds P.N."/>
            <person name="Kobe B."/>
            <person name="Jones J.D."/>
        </authorList>
    </citation>
    <scope>X-RAY CRYSTALLOGRAPHY (2.05 ANGSTROMS) OF 11-178 IN COMPLEX WITH RRS1</scope>
    <scope>DOMAIN</scope>
    <scope>FUNCTION</scope>
    <scope>MUTAGENESIS OF ARG-30; SER-33; HIS-34 AND LYS-242</scope>
    <source>
        <strain>cv. Columbia</strain>
    </source>
</reference>
<gene>
    <name evidence="21" type="primary">RPS4</name>
    <name evidence="28" type="ordered locus">At5g45250</name>
    <name evidence="30" type="ORF">K9E15.1</name>
</gene>
<dbReference type="EC" id="3.2.2.6" evidence="26 27"/>
<dbReference type="EMBL" id="AJ243468">
    <property type="protein sequence ID" value="CAB50708.1"/>
    <property type="molecule type" value="Genomic_DNA"/>
</dbReference>
<dbReference type="EMBL" id="AB020744">
    <property type="protein sequence ID" value="BAB10246.1"/>
    <property type="molecule type" value="Genomic_DNA"/>
</dbReference>
<dbReference type="EMBL" id="CP002688">
    <property type="protein sequence ID" value="AED95221.1"/>
    <property type="molecule type" value="Genomic_DNA"/>
</dbReference>
<dbReference type="PIR" id="T51140">
    <property type="entry name" value="T51140"/>
</dbReference>
<dbReference type="RefSeq" id="NP_199338.1">
    <molecule id="Q9XGM3-1"/>
    <property type="nucleotide sequence ID" value="NM_123893.2"/>
</dbReference>
<dbReference type="PDB" id="4C6R">
    <property type="method" value="X-ray"/>
    <property type="resolution" value="2.05 A"/>
    <property type="chains" value="A/B/C/D=11-178"/>
</dbReference>
<dbReference type="PDB" id="4C6T">
    <property type="method" value="X-ray"/>
    <property type="resolution" value="2.65 A"/>
    <property type="chains" value="B/D=11-178"/>
</dbReference>
<dbReference type="PDBsum" id="4C6R"/>
<dbReference type="PDBsum" id="4C6T"/>
<dbReference type="SMR" id="Q9XGM3"/>
<dbReference type="BioGRID" id="19810">
    <property type="interactions" value="2"/>
</dbReference>
<dbReference type="DIP" id="DIP-61677N"/>
<dbReference type="FunCoup" id="Q9XGM3">
    <property type="interactions" value="259"/>
</dbReference>
<dbReference type="IntAct" id="Q9XGM3">
    <property type="interactions" value="3"/>
</dbReference>
<dbReference type="STRING" id="3702.Q9XGM3"/>
<dbReference type="iPTMnet" id="Q9XGM3"/>
<dbReference type="PaxDb" id="3702-AT5G45250.1"/>
<dbReference type="ProteomicsDB" id="226512">
    <molecule id="Q9XGM3-1"/>
</dbReference>
<dbReference type="EnsemblPlants" id="AT5G45250.1">
    <molecule id="Q9XGM3-1"/>
    <property type="protein sequence ID" value="AT5G45250.1"/>
    <property type="gene ID" value="AT5G45250"/>
</dbReference>
<dbReference type="GeneID" id="834561"/>
<dbReference type="Gramene" id="AT5G45250.1">
    <molecule id="Q9XGM3-1"/>
    <property type="protein sequence ID" value="AT5G45250.1"/>
    <property type="gene ID" value="AT5G45250"/>
</dbReference>
<dbReference type="KEGG" id="ath:AT5G45250"/>
<dbReference type="Araport" id="AT5G45250"/>
<dbReference type="TAIR" id="AT5G45250">
    <property type="gene designation" value="RPS4"/>
</dbReference>
<dbReference type="eggNOG" id="ENOG502SI7S">
    <property type="taxonomic scope" value="Eukaryota"/>
</dbReference>
<dbReference type="HOGENOM" id="CLU_001561_0_3_1"/>
<dbReference type="InParanoid" id="Q9XGM3"/>
<dbReference type="OMA" id="NLIPNIM"/>
<dbReference type="PhylomeDB" id="Q9XGM3"/>
<dbReference type="EvolutionaryTrace" id="Q9XGM3"/>
<dbReference type="PRO" id="PR:Q9XGM3"/>
<dbReference type="Proteomes" id="UP000006548">
    <property type="component" value="Chromosome 5"/>
</dbReference>
<dbReference type="ExpressionAtlas" id="Q9XGM3">
    <property type="expression patterns" value="baseline and differential"/>
</dbReference>
<dbReference type="GO" id="GO:0005737">
    <property type="term" value="C:cytoplasm"/>
    <property type="evidence" value="ECO:0007669"/>
    <property type="project" value="UniProtKB-SubCell"/>
</dbReference>
<dbReference type="GO" id="GO:0012505">
    <property type="term" value="C:endomembrane system"/>
    <property type="evidence" value="ECO:0000314"/>
    <property type="project" value="TAIR"/>
</dbReference>
<dbReference type="GO" id="GO:0016020">
    <property type="term" value="C:membrane"/>
    <property type="evidence" value="ECO:0000250"/>
    <property type="project" value="TAIR"/>
</dbReference>
<dbReference type="GO" id="GO:0005634">
    <property type="term" value="C:nucleus"/>
    <property type="evidence" value="ECO:0000314"/>
    <property type="project" value="TAIR"/>
</dbReference>
<dbReference type="GO" id="GO:0043531">
    <property type="term" value="F:ADP binding"/>
    <property type="evidence" value="ECO:0007669"/>
    <property type="project" value="InterPro"/>
</dbReference>
<dbReference type="GO" id="GO:0005524">
    <property type="term" value="F:ATP binding"/>
    <property type="evidence" value="ECO:0007669"/>
    <property type="project" value="UniProtKB-KW"/>
</dbReference>
<dbReference type="GO" id="GO:0042802">
    <property type="term" value="F:identical protein binding"/>
    <property type="evidence" value="ECO:0000353"/>
    <property type="project" value="IntAct"/>
</dbReference>
<dbReference type="GO" id="GO:0061809">
    <property type="term" value="F:NAD+ nucleosidase activity, cyclic ADP-ribose generating"/>
    <property type="evidence" value="ECO:0007669"/>
    <property type="project" value="UniProtKB-EC"/>
</dbReference>
<dbReference type="GO" id="GO:0042742">
    <property type="term" value="P:defense response to bacterium"/>
    <property type="evidence" value="ECO:0000314"/>
    <property type="project" value="TAIR"/>
</dbReference>
<dbReference type="GO" id="GO:0002758">
    <property type="term" value="P:innate immune response-activating signaling pathway"/>
    <property type="evidence" value="ECO:0000314"/>
    <property type="project" value="TAIR"/>
</dbReference>
<dbReference type="GO" id="GO:0009626">
    <property type="term" value="P:plant-type hypersensitive response"/>
    <property type="evidence" value="ECO:0000315"/>
    <property type="project" value="TAIR"/>
</dbReference>
<dbReference type="FunFam" id="1.10.8.430:FF:000002">
    <property type="entry name" value="Disease resistance protein (TIR-NBS-LRR class)"/>
    <property type="match status" value="1"/>
</dbReference>
<dbReference type="FunFam" id="3.40.50.10140:FF:000007">
    <property type="entry name" value="Disease resistance protein (TIR-NBS-LRR class)"/>
    <property type="match status" value="1"/>
</dbReference>
<dbReference type="FunFam" id="3.40.50.300:FF:001862">
    <property type="entry name" value="Disease resistance protein RPS4"/>
    <property type="match status" value="1"/>
</dbReference>
<dbReference type="FunFam" id="3.80.10.10:FF:000386">
    <property type="entry name" value="Disease resistance protein RPS4"/>
    <property type="match status" value="1"/>
</dbReference>
<dbReference type="FunFam" id="3.80.10.10:FF:000568">
    <property type="entry name" value="Disease resistance protein RPS4"/>
    <property type="match status" value="1"/>
</dbReference>
<dbReference type="Gene3D" id="1.10.8.430">
    <property type="entry name" value="Helical domain of apoptotic protease-activating factors"/>
    <property type="match status" value="1"/>
</dbReference>
<dbReference type="Gene3D" id="3.40.50.300">
    <property type="entry name" value="P-loop containing nucleotide triphosphate hydrolases"/>
    <property type="match status" value="1"/>
</dbReference>
<dbReference type="Gene3D" id="3.80.10.10">
    <property type="entry name" value="Ribonuclease Inhibitor"/>
    <property type="match status" value="2"/>
</dbReference>
<dbReference type="Gene3D" id="3.40.50.10140">
    <property type="entry name" value="Toll/interleukin-1 receptor homology (TIR) domain"/>
    <property type="match status" value="1"/>
</dbReference>
<dbReference type="InterPro" id="IPR042197">
    <property type="entry name" value="Apaf_helical"/>
</dbReference>
<dbReference type="InterPro" id="IPR045344">
    <property type="entry name" value="C-JID"/>
</dbReference>
<dbReference type="InterPro" id="IPR044974">
    <property type="entry name" value="Disease_R_plants"/>
</dbReference>
<dbReference type="InterPro" id="IPR011713">
    <property type="entry name" value="Leu-rich_rpt_3"/>
</dbReference>
<dbReference type="InterPro" id="IPR032675">
    <property type="entry name" value="LRR_dom_sf"/>
</dbReference>
<dbReference type="InterPro" id="IPR002182">
    <property type="entry name" value="NB-ARC"/>
</dbReference>
<dbReference type="InterPro" id="IPR027417">
    <property type="entry name" value="P-loop_NTPase"/>
</dbReference>
<dbReference type="InterPro" id="IPR000157">
    <property type="entry name" value="TIR_dom"/>
</dbReference>
<dbReference type="InterPro" id="IPR035897">
    <property type="entry name" value="Toll_tir_struct_dom_sf"/>
</dbReference>
<dbReference type="PANTHER" id="PTHR11017:SF277">
    <property type="entry name" value="DISEASE RESISTANCE PROTEIN RPS4-RELATED"/>
    <property type="match status" value="1"/>
</dbReference>
<dbReference type="PANTHER" id="PTHR11017">
    <property type="entry name" value="LEUCINE-RICH REPEAT-CONTAINING PROTEIN"/>
    <property type="match status" value="1"/>
</dbReference>
<dbReference type="Pfam" id="PF20160">
    <property type="entry name" value="C-JID"/>
    <property type="match status" value="1"/>
</dbReference>
<dbReference type="Pfam" id="PF07725">
    <property type="entry name" value="LRR_3"/>
    <property type="match status" value="1"/>
</dbReference>
<dbReference type="Pfam" id="PF00931">
    <property type="entry name" value="NB-ARC"/>
    <property type="match status" value="1"/>
</dbReference>
<dbReference type="Pfam" id="PF01582">
    <property type="entry name" value="TIR"/>
    <property type="match status" value="1"/>
</dbReference>
<dbReference type="Pfam" id="PF23282">
    <property type="entry name" value="WHD_ROQ1"/>
    <property type="match status" value="1"/>
</dbReference>
<dbReference type="PRINTS" id="PR00364">
    <property type="entry name" value="DISEASERSIST"/>
</dbReference>
<dbReference type="SMART" id="SM00255">
    <property type="entry name" value="TIR"/>
    <property type="match status" value="1"/>
</dbReference>
<dbReference type="SUPFAM" id="SSF52058">
    <property type="entry name" value="L domain-like"/>
    <property type="match status" value="1"/>
</dbReference>
<dbReference type="SUPFAM" id="SSF52540">
    <property type="entry name" value="P-loop containing nucleoside triphosphate hydrolases"/>
    <property type="match status" value="1"/>
</dbReference>
<dbReference type="SUPFAM" id="SSF52200">
    <property type="entry name" value="Toll/Interleukin receptor TIR domain"/>
    <property type="match status" value="1"/>
</dbReference>
<dbReference type="PROSITE" id="PS50104">
    <property type="entry name" value="TIR"/>
    <property type="match status" value="1"/>
</dbReference>
<comment type="function">
    <text evidence="6 7 8 11 16 17 18 19 20 24 25">Disease resistance (R) protein that specifically recognizes the AvrRps4 type III effector avirulence protein from P.syringae (PubMed:10571887, PubMed:15469494, PubMed:19519800). Resistance proteins guard the plant against pathogens that contain an appropriate avirulence protein via an indirect interaction with this avirulence protein (PubMed:10571887, PubMed:15469494, PubMed:19519800). That triggers a defense system including the hypersensitive response, which restricts the pathogen growth (PubMed:10571887, PubMed:15469494, PubMed:19519800). Probably acts as a NAD(+) hydrolase (NADase): in response to activation, catalyzes cleavage of NAD(+) into ADP-D-ribose (ADPR) and nicotinamide; NAD(+) cleavage triggering a defense system that promotes cell death (PubMed:31439792, PubMed:31439793). The combined presence of both regular and alternative RPS4 transcripts with truncated open reading frames (ORFs) is necessary for function (PubMed:17951452). RPS4 function is regulated at multiple levels, including gene expression, alternative splicing, and protein stability (PubMed:17951452). When over-expressed, confers temperature-conditioned EDS1-dependent auto-immunity (PubMed:24146667). Heterodimerization with RRS1 is required to form a functional complex to recognize AvrRps4 and PopP2 (PubMed:24744375). Abscisic acid deficiency enhances nuclear accumulation of RPS4 and its cell death-inducing activity (PubMed:22454454).</text>
</comment>
<comment type="catalytic activity">
    <reaction evidence="26 27">
        <text>NAD(+) + H2O = ADP-D-ribose + nicotinamide + H(+)</text>
        <dbReference type="Rhea" id="RHEA:16301"/>
        <dbReference type="ChEBI" id="CHEBI:15377"/>
        <dbReference type="ChEBI" id="CHEBI:15378"/>
        <dbReference type="ChEBI" id="CHEBI:17154"/>
        <dbReference type="ChEBI" id="CHEBI:57540"/>
        <dbReference type="ChEBI" id="CHEBI:57967"/>
        <dbReference type="EC" id="3.2.2.6"/>
    </reaction>
    <physiologicalReaction direction="left-to-right" evidence="26 27">
        <dbReference type="Rhea" id="RHEA:16302"/>
    </physiologicalReaction>
</comment>
<comment type="subunit">
    <text evidence="12 13 14 18">Interacts with EDS1 (PubMed:22158818, PubMed:22158819). Interacts with SRFR1 (PubMed:21079790). Interacts with RRS1 (PubMed:24744375).</text>
</comment>
<comment type="interaction">
    <interactant intactId="EBI-16102886">
        <id>Q9XGM3</id>
    </interactant>
    <interactant intactId="EBI-16102886">
        <id>Q9XGM3</id>
        <label>RPS4</label>
    </interactant>
    <organismsDiffer>false</organismsDiffer>
    <experiments>6</experiments>
</comment>
<comment type="interaction">
    <interactant intactId="EBI-16102886">
        <id>Q9XGM3</id>
    </interactant>
    <interactant intactId="EBI-15211292">
        <id>P0DKH5</id>
        <label>RRS1</label>
    </interactant>
    <organismsDiffer>false</organismsDiffer>
    <experiments>18</experiments>
</comment>
<comment type="subcellular location">
    <subcellularLocation>
        <location evidence="9">Endomembrane system</location>
    </subcellularLocation>
    <subcellularLocation>
        <location evidence="13">Cytoplasm</location>
    </subcellularLocation>
    <subcellularLocation>
        <location evidence="9 13 16">Nucleus</location>
    </subcellularLocation>
    <text evidence="9 12 13 16">Nuclear accumulation is necessary for triggering EDS1-dependent defense (PubMed:17997306). Found in microsomes when interacting with SRFR1 (PubMed:21079790). Accumulates in the cytoplasm and the nucleus, when associated with EDS1 (PubMed:22158818). Accumulates in nucleus at 22 degrees Celsius, but not at 28 degrees Celsius (PubMed:22454454).</text>
</comment>
<comment type="alternative products">
    <event type="alternative splicing"/>
    <isoform>
        <id>Q9XGM3-1</id>
        <name>1</name>
        <sequence type="displayed"/>
    </isoform>
    <text evidence="6 8">A number of isoforms are produced.</text>
</comment>
<comment type="induction">
    <text evidence="8">Up-regulated by AvrRps4 in an EDS1-dependent manner.</text>
</comment>
<comment type="domain">
    <text evidence="10 18 23">The TIR domain is a signaling domain involved in cell death induction (PubMed:19132868). It is involved in homo- and heterodimerization, but other domains also contribute to the interaction (PubMed:24744375). The LRR domain may interact directly with pathogen-derived elicitors (PubMed:10571887).</text>
</comment>
<comment type="domain">
    <text evidence="3">The TIR domain mediates NAD(+) hydrolase (NADase) activity. Self-association of TIR domains is required for NADase activity.</text>
</comment>
<comment type="disruption phenotype">
    <text evidence="7">Loss of resistance to P.syringae expressing AvrRps4.</text>
</comment>
<comment type="miscellaneous">
    <text evidence="15">MOS12 and the MOS4-associated complex (MAC) are required for the proper splicing of R genes and contribute in the alternative splicing of RPS4.</text>
</comment>
<comment type="miscellaneous">
    <text evidence="6">Only two amino-acid changes (N195D and Y950H) are linked to a change from a resistant strain (cv. Columbia or cv. Landsberg erecta) to a susceptible one (cv. RLD).</text>
</comment>
<comment type="similarity">
    <text evidence="22">Belongs to the disease resistance TIR-NB-LRR family.</text>
</comment>
<comment type="online information" name="NIB-LRRS">
    <link uri="http://niblrrs.ucdavis.edu"/>
    <text>Functional and comparative genomics of disease resistance gene homologs</text>
</comment>
<sequence>METSSISTVEDKPPQHQVFINFRGADLRRRFVSHLVTALKLNNINVFIDDYEDRGQPLDVLLKRIEESKIVLAIFSGNYTESVWCVRELEKIKDCTDEGTLVAIPIFYKLEPSTVRDLKGKFGDRFRSMAKGDERKKKWKEAFNLIPNIMGIIIDKKSVESEKVNEIVKAVKTALTGIPPEGSHNAVVGALGNSNAGTSSGDKKHETFGNEQRLKDLEEKLDRDKYKGTRIIGVVGMPGIGKTTLLKELYKTWQGKFSRHALIDQIRVKSKHLELDRLPQMLLGELSKLNHPHVDNLKDPYSQLHERKVLVVLDDVSKREQIDALREILDWIKEGKEGSRVVIATSDMSLTNGLVDDTYMVQNLNHRDSLQLFHYHAFIDDQANPQKKDFMKLSEGFVHYARGHPLALKVLGGELNKKSMDHWNSKMKKLAQSPSPNIVSVFQVSYDELTTAQKDAFLDIACFRSQDKDYVESLLASSDLGSAEAMSAVKSLTDKFLINTCDGRVEMHDLLYKFSREVDLKASNQDGSRQRRLWLHQHIIKGGIINVLQNKMKAANVRGIFLDLSEVEDETSLDRDHFINMGNLRYLKFYNSHCPQECKTNNKINIPDKLKLPLKEVRCLHWLKFPLETLPNDFNPINLVDLKLPYSEMEQLWEGDKDTPCLRWVDLNHSSKLCSLSGLSKAEKLQRLNLEGCTTLKAFPHDMKKMKMLAFLNLKGCTSLESLPEMNLISLKTLTLSGCSTFKEFPLISDNIETLYLDGTAISQLPMNMEKLQRLVVLNMKDCKMLEEIPGRVGELKALQELILSDCLNLKIFPEIDISFLNILLLDGTAIEVMPQLPSVQYLCLSRNAKISCLPVGISQLSQLKWLDLKYCTSLTSVPEFPPNLQCLDAHGCSSLKTVSKPLARIMPTEQNHSTFIFTNCENLEQAAKEEITSYAQRKCQLLSYARKRYNGGLVSESLFSTCFPGCEVPSWFCHETVGSELEVKLLPHWHDKKLAGIALCAVVSCLDPQDQVSRLSVTCTFKVKDEDKSWVAYTCPVGSWTRHGGGKDKIELDHVFIGYTSCPHTIKCHEEGNSDECNPTEASLKFTVTGGTSENGKYKVLKCGLSLVYAKDKDKNSALETKYDMLIGKSFQETSEGVDGRVKKTKGKYVMPVEKNFQETTEGVDGRVNKKKKTRMDNGRPKKKQRSGRDDNQTRMQVELQEGNINSVIMHTVKNF</sequence>
<organism evidence="31">
    <name type="scientific">Arabidopsis thaliana</name>
    <name type="common">Mouse-ear cress</name>
    <dbReference type="NCBI Taxonomy" id="3702"/>
    <lineage>
        <taxon>Eukaryota</taxon>
        <taxon>Viridiplantae</taxon>
        <taxon>Streptophyta</taxon>
        <taxon>Embryophyta</taxon>
        <taxon>Tracheophyta</taxon>
        <taxon>Spermatophyta</taxon>
        <taxon>Magnoliopsida</taxon>
        <taxon>eudicotyledons</taxon>
        <taxon>Gunneridae</taxon>
        <taxon>Pentapetalae</taxon>
        <taxon>rosids</taxon>
        <taxon>malvids</taxon>
        <taxon>Brassicales</taxon>
        <taxon>Brassicaceae</taxon>
        <taxon>Camelineae</taxon>
        <taxon>Arabidopsis</taxon>
    </lineage>
</organism>
<accession>Q9XGM3</accession>
<evidence type="ECO:0000250" key="1">
    <source>
        <dbReference type="UniProtKB" id="V9M398"/>
    </source>
</evidence>
<evidence type="ECO:0000255" key="2"/>
<evidence type="ECO:0000255" key="3">
    <source>
        <dbReference type="PROSITE-ProRule" id="PRU00204"/>
    </source>
</evidence>
<evidence type="ECO:0000255" key="4">
    <source>
        <dbReference type="PROSITE-ProRule" id="PRU00768"/>
    </source>
</evidence>
<evidence type="ECO:0000256" key="5">
    <source>
        <dbReference type="SAM" id="MobiDB-lite"/>
    </source>
</evidence>
<evidence type="ECO:0000269" key="6">
    <source>
    </source>
</evidence>
<evidence type="ECO:0000269" key="7">
    <source>
    </source>
</evidence>
<evidence type="ECO:0000269" key="8">
    <source>
    </source>
</evidence>
<evidence type="ECO:0000269" key="9">
    <source>
    </source>
</evidence>
<evidence type="ECO:0000269" key="10">
    <source>
    </source>
</evidence>
<evidence type="ECO:0000269" key="11">
    <source>
    </source>
</evidence>
<evidence type="ECO:0000269" key="12">
    <source>
    </source>
</evidence>
<evidence type="ECO:0000269" key="13">
    <source>
    </source>
</evidence>
<evidence type="ECO:0000269" key="14">
    <source>
    </source>
</evidence>
<evidence type="ECO:0000269" key="15">
    <source>
    </source>
</evidence>
<evidence type="ECO:0000269" key="16">
    <source>
    </source>
</evidence>
<evidence type="ECO:0000269" key="17">
    <source>
    </source>
</evidence>
<evidence type="ECO:0000269" key="18">
    <source>
    </source>
</evidence>
<evidence type="ECO:0000269" key="19">
    <source>
    </source>
</evidence>
<evidence type="ECO:0000269" key="20">
    <source>
    </source>
</evidence>
<evidence type="ECO:0000303" key="21">
    <source>
    </source>
</evidence>
<evidence type="ECO:0000305" key="22"/>
<evidence type="ECO:0000305" key="23">
    <source>
    </source>
</evidence>
<evidence type="ECO:0000305" key="24">
    <source>
    </source>
</evidence>
<evidence type="ECO:0000305" key="25">
    <source>
    </source>
</evidence>
<evidence type="ECO:0000305" key="26">
    <source>
    </source>
</evidence>
<evidence type="ECO:0000305" key="27">
    <source>
    </source>
</evidence>
<evidence type="ECO:0000312" key="28">
    <source>
        <dbReference type="Araport" id="AT5G45250"/>
    </source>
</evidence>
<evidence type="ECO:0000312" key="29">
    <source>
        <dbReference type="EMBL" id="AED95221.1"/>
    </source>
</evidence>
<evidence type="ECO:0000312" key="30">
    <source>
        <dbReference type="EMBL" id="BAB10246.1"/>
    </source>
</evidence>
<evidence type="ECO:0000312" key="31">
    <source>
        <dbReference type="EMBL" id="CAB50708.1"/>
    </source>
</evidence>
<evidence type="ECO:0007829" key="32">
    <source>
        <dbReference type="PDB" id="4C6R"/>
    </source>
</evidence>
<feature type="chain" id="PRO_0000431365" description="Disease resistance protein RPS4">
    <location>
        <begin position="1"/>
        <end position="1217"/>
    </location>
</feature>
<feature type="domain" description="TIR" evidence="3">
    <location>
        <begin position="14"/>
        <end position="175"/>
    </location>
</feature>
<feature type="domain" description="NB-ARC" evidence="2">
    <location>
        <begin position="211"/>
        <end position="472"/>
    </location>
</feature>
<feature type="repeat" description="LRR 1" evidence="2">
    <location>
        <begin position="581"/>
        <end position="606"/>
    </location>
</feature>
<feature type="repeat" description="LRR 2" evidence="2">
    <location>
        <begin position="614"/>
        <end position="636"/>
    </location>
</feature>
<feature type="repeat" description="LRR 3" evidence="2">
    <location>
        <begin position="637"/>
        <end position="659"/>
    </location>
</feature>
<feature type="repeat" description="LRR 4" evidence="2">
    <location>
        <begin position="682"/>
        <end position="706"/>
    </location>
</feature>
<feature type="repeat" description="LRR 5" evidence="2">
    <location>
        <begin position="708"/>
        <end position="728"/>
    </location>
</feature>
<feature type="repeat" description="LRR 6" evidence="2">
    <location>
        <begin position="729"/>
        <end position="749"/>
    </location>
</feature>
<feature type="repeat" description="LRR 7" evidence="2">
    <location>
        <begin position="750"/>
        <end position="774"/>
    </location>
</feature>
<feature type="repeat" description="LRR 8" evidence="2">
    <location>
        <begin position="796"/>
        <end position="818"/>
    </location>
</feature>
<feature type="repeat" description="LRR 9" evidence="2">
    <location>
        <begin position="819"/>
        <end position="842"/>
    </location>
</feature>
<feature type="repeat" description="LRR 10" evidence="2">
    <location>
        <begin position="843"/>
        <end position="860"/>
    </location>
</feature>
<feature type="repeat" description="LRR 11" evidence="2">
    <location>
        <begin position="861"/>
        <end position="887"/>
    </location>
</feature>
<feature type="region of interest" description="Important for interaction with RRS1" evidence="18">
    <location>
        <begin position="33"/>
        <end position="34"/>
    </location>
</feature>
<feature type="region of interest" description="Disordered" evidence="5">
    <location>
        <begin position="1161"/>
        <end position="1195"/>
    </location>
</feature>
<feature type="short sequence motif" description="Nuclear localization signal" evidence="4">
    <location>
        <begin position="1170"/>
        <end position="1177"/>
    </location>
</feature>
<feature type="active site" evidence="3">
    <location>
        <position position="88"/>
    </location>
</feature>
<feature type="binding site" evidence="1">
    <location>
        <begin position="23"/>
        <end position="28"/>
    </location>
    <ligand>
        <name>NAD(+)</name>
        <dbReference type="ChEBI" id="CHEBI:57540"/>
    </ligand>
</feature>
<feature type="mutagenesis site" description="Loss of cell death." evidence="10">
    <original>D</original>
    <variation>A</variation>
    <location>
        <position position="26"/>
    </location>
</feature>
<feature type="mutagenesis site" description="Loss of cell death." evidence="10">
    <original>R</original>
    <variation>E</variation>
    <location>
        <position position="28"/>
    </location>
</feature>
<feature type="mutagenesis site" description="Increased homodimerization and stronger cell death induction." evidence="18">
    <original>R</original>
    <variation>A</variation>
    <location>
        <position position="30"/>
    </location>
</feature>
<feature type="mutagenesis site" description="Loss of TIR domain homodimerization. Loss of TIR domain heterodimerization; when associated with A-25 in RRS1. Loss of cell death induction." evidence="18">
    <original>S</original>
    <variation>A</variation>
    <location>
        <position position="33"/>
    </location>
</feature>
<feature type="mutagenesis site" description="Loss of TIR domain homodimerization. Loss of TIR domain heterodimerization with RRS1. Loss of cell death induction." evidence="18">
    <original>H</original>
    <variation>A</variation>
    <location>
        <position position="34"/>
    </location>
</feature>
<feature type="mutagenesis site" description="Decreased cell death." evidence="10">
    <original>DD</original>
    <variation>AA</variation>
    <location>
        <begin position="49"/>
        <end position="50"/>
    </location>
</feature>
<feature type="mutagenesis site" description="Loss of cell death." evidence="10">
    <original>D</original>
    <variation>A</variation>
    <location>
        <position position="49"/>
    </location>
</feature>
<feature type="mutagenesis site" description="Loss of cell death." evidence="10">
    <original>DYED</original>
    <variation>NYQN</variation>
    <location>
        <begin position="50"/>
        <end position="53"/>
    </location>
</feature>
<feature type="mutagenesis site" description="Loss of cell death." evidence="10">
    <original>R</original>
    <variation>N</variation>
    <location>
        <position position="54"/>
    </location>
</feature>
<feature type="mutagenesis site" description="Loss of cell death." evidence="10">
    <original>S</original>
    <variation>A</variation>
    <location>
        <position position="68"/>
    </location>
</feature>
<feature type="mutagenesis site" description="Loss of cell death." evidence="10">
    <original>Y</original>
    <variation>A</variation>
    <variation>F</variation>
    <location>
        <position position="79"/>
    </location>
</feature>
<feature type="mutagenesis site" description="Increased cell death." evidence="10">
    <original>W</original>
    <variation>A</variation>
    <location>
        <position position="84"/>
    </location>
</feature>
<feature type="mutagenesis site" description="Loss of cell death." evidence="10">
    <original>C</original>
    <variation>A</variation>
    <location>
        <position position="85"/>
    </location>
</feature>
<feature type="mutagenesis site" description="Loss of cell death." evidence="10">
    <original>E</original>
    <variation>A</variation>
    <location>
        <position position="88"/>
    </location>
</feature>
<feature type="mutagenesis site" description="No effect on cell death." evidence="10">
    <original>D</original>
    <variation>N</variation>
    <location>
        <position position="94"/>
    </location>
</feature>
<feature type="mutagenesis site" description="No effect on cell death." evidence="10">
    <original>C</original>
    <variation>A</variation>
    <location>
        <position position="95"/>
    </location>
</feature>
<feature type="mutagenesis site" description="No effect on cell death." evidence="10">
    <original>DE</original>
    <variation>KK</variation>
    <location>
        <begin position="97"/>
        <end position="98"/>
    </location>
</feature>
<feature type="mutagenesis site" description="Increased cell death." evidence="10">
    <original>DE</original>
    <variation>QN</variation>
    <location>
        <begin position="97"/>
        <end position="98"/>
    </location>
</feature>
<feature type="mutagenesis site" description="Increased cell death." evidence="10">
    <original>E</original>
    <variation>K</variation>
    <location>
        <position position="111"/>
    </location>
</feature>
<feature type="mutagenesis site" description="Loss of cell death." evidence="10">
    <original>P</original>
    <variation>A</variation>
    <variation>K</variation>
    <location>
        <position position="112"/>
    </location>
</feature>
<feature type="mutagenesis site" description="Loss of cell death." evidence="10">
    <original>ST</original>
    <variation>EE</variation>
    <location>
        <begin position="113"/>
        <end position="114"/>
    </location>
</feature>
<feature type="mutagenesis site" description="Loss of cell death." evidence="10">
    <original>R</original>
    <variation>A</variation>
    <location>
        <position position="116"/>
    </location>
</feature>
<feature type="mutagenesis site" description="Loss of cell death." evidence="10">
    <location>
        <begin position="129"/>
        <end position="130"/>
    </location>
</feature>
<feature type="mutagenesis site" description="Increased cell death." evidence="10">
    <original>DE</original>
    <variation>NQ</variation>
    <location>
        <begin position="133"/>
        <end position="134"/>
    </location>
</feature>
<feature type="mutagenesis site" description="Increased cell death." evidence="10">
    <original>E</original>
    <variation>A</variation>
    <variation>K</variation>
    <location>
        <position position="134"/>
    </location>
</feature>
<feature type="mutagenesis site" description="Loss of cell death." evidence="10">
    <original>R</original>
    <variation>E</variation>
    <location>
        <position position="135"/>
    </location>
</feature>
<feature type="mutagenesis site" description="Loss of cell death." evidence="10">
    <location>
        <begin position="136"/>
        <end position="138"/>
    </location>
</feature>
<feature type="mutagenesis site" description="Loss of cell death." evidence="10">
    <original>K</original>
    <variation>E</variation>
    <location>
        <position position="137"/>
    </location>
</feature>
<feature type="mutagenesis site" description="Loss of cell death." evidence="10">
    <original>W</original>
    <variation>A</variation>
    <variation>F</variation>
    <location>
        <position position="139"/>
    </location>
</feature>
<feature type="mutagenesis site" description="Loss of cell death." evidence="10">
    <original>K</original>
    <variation>N</variation>
    <location>
        <position position="140"/>
    </location>
</feature>
<feature type="mutagenesis site" description="Loss of cell death." evidence="10">
    <original>E</original>
    <variation>A</variation>
    <location>
        <position position="160"/>
    </location>
</feature>
<feature type="mutagenesis site" description="Loss of pathogen effectors recognition." evidence="18">
    <original>K</original>
    <variation>A</variation>
    <location>
        <position position="242"/>
    </location>
</feature>
<feature type="mutagenesis site" description="Loss of nuclear localization; when associated with 1172-A-A-1173." evidence="9">
    <original>KK</original>
    <variation>AA</variation>
    <location>
        <begin position="1172"/>
        <end position="1173"/>
    </location>
</feature>
<feature type="mutagenesis site" description="Loss of nuclear localization; when associated with 1184-A-A-1185." evidence="9">
    <original>KK</original>
    <variation>AA</variation>
    <location>
        <begin position="1184"/>
        <end position="1185"/>
    </location>
</feature>
<feature type="strand" evidence="32">
    <location>
        <begin position="17"/>
        <end position="21"/>
    </location>
</feature>
<feature type="helix" evidence="32">
    <location>
        <begin position="25"/>
        <end position="29"/>
    </location>
</feature>
<feature type="helix" evidence="32">
    <location>
        <begin position="31"/>
        <end position="41"/>
    </location>
</feature>
<feature type="strand" evidence="32">
    <location>
        <begin position="46"/>
        <end position="48"/>
    </location>
</feature>
<feature type="helix" evidence="32">
    <location>
        <begin position="58"/>
        <end position="67"/>
    </location>
</feature>
<feature type="strand" evidence="32">
    <location>
        <begin position="69"/>
        <end position="75"/>
    </location>
</feature>
<feature type="helix" evidence="32">
    <location>
        <begin position="79"/>
        <end position="81"/>
    </location>
</feature>
<feature type="helix" evidence="32">
    <location>
        <begin position="83"/>
        <end position="98"/>
    </location>
</feature>
<feature type="strand" evidence="32">
    <location>
        <begin position="100"/>
        <end position="110"/>
    </location>
</feature>
<feature type="helix" evidence="32">
    <location>
        <begin position="112"/>
        <end position="116"/>
    </location>
</feature>
<feature type="helix" evidence="32">
    <location>
        <begin position="120"/>
        <end position="129"/>
    </location>
</feature>
<feature type="turn" evidence="32">
    <location>
        <begin position="130"/>
        <end position="132"/>
    </location>
</feature>
<feature type="helix" evidence="32">
    <location>
        <begin position="136"/>
        <end position="145"/>
    </location>
</feature>
<feature type="helix" evidence="32">
    <location>
        <begin position="146"/>
        <end position="148"/>
    </location>
</feature>
<feature type="strand" evidence="32">
    <location>
        <begin position="152"/>
        <end position="154"/>
    </location>
</feature>
<feature type="helix" evidence="32">
    <location>
        <begin position="160"/>
        <end position="175"/>
    </location>
</feature>